<evidence type="ECO:0000250" key="1">
    <source>
        <dbReference type="UniProtKB" id="O75844"/>
    </source>
</evidence>
<evidence type="ECO:0000255" key="2"/>
<evidence type="ECO:0000255" key="3">
    <source>
        <dbReference type="PROSITE-ProRule" id="PRU10095"/>
    </source>
</evidence>
<evidence type="ECO:0000269" key="4">
    <source>
    </source>
</evidence>
<evidence type="ECO:0000269" key="5">
    <source>
    </source>
</evidence>
<evidence type="ECO:0000269" key="6">
    <source>
    </source>
</evidence>
<evidence type="ECO:0000269" key="7">
    <source>
    </source>
</evidence>
<evidence type="ECO:0000269" key="8">
    <source>
    </source>
</evidence>
<evidence type="ECO:0000269" key="9">
    <source>
    </source>
</evidence>
<evidence type="ECO:0000305" key="10"/>
<evidence type="ECO:0000305" key="11">
    <source>
    </source>
</evidence>
<evidence type="ECO:0000312" key="12">
    <source>
        <dbReference type="SGD" id="S000001795"/>
    </source>
</evidence>
<feature type="chain" id="PRO_0000203225" description="Mitochondrial metalloendopeptidase OMA1">
    <location>
        <begin position="1"/>
        <end position="345"/>
    </location>
</feature>
<feature type="topological domain" description="Mitochondrial matrix" evidence="10">
    <location>
        <begin position="1"/>
        <end position="67"/>
    </location>
</feature>
<feature type="transmembrane region" description="Helical" evidence="2">
    <location>
        <begin position="68"/>
        <end position="88"/>
    </location>
</feature>
<feature type="topological domain" description="Mitochondrial intermembrane" evidence="10">
    <location>
        <begin position="89"/>
        <end position="345"/>
    </location>
</feature>
<feature type="region of interest" description="Required for protease activation" evidence="6">
    <location>
        <begin position="314"/>
        <end position="345"/>
    </location>
</feature>
<feature type="active site" evidence="3 11">
    <location>
        <position position="204"/>
    </location>
</feature>
<feature type="binding site" evidence="3">
    <location>
        <position position="203"/>
    </location>
    <ligand>
        <name>Zn(2+)</name>
        <dbReference type="ChEBI" id="CHEBI:29105"/>
        <note>catalytic</note>
    </ligand>
</feature>
<feature type="binding site" evidence="3">
    <location>
        <position position="207"/>
    </location>
    <ligand>
        <name>Zn(2+)</name>
        <dbReference type="ChEBI" id="CHEBI:29105"/>
        <note>catalytic</note>
    </ligand>
</feature>
<feature type="binding site" evidence="3">
    <location>
        <position position="257"/>
    </location>
    <ligand>
        <name>Zn(2+)</name>
        <dbReference type="ChEBI" id="CHEBI:29105"/>
        <note>catalytic</note>
    </ligand>
</feature>
<feature type="disulfide bond" evidence="9">
    <location>
        <begin position="272"/>
        <end position="332"/>
    </location>
</feature>
<feature type="mutagenesis site" description="Significantly decreased protease activity." evidence="6">
    <original>H</original>
    <variation>A</variation>
    <location>
        <position position="203"/>
    </location>
</feature>
<feature type="mutagenesis site" description="Significantly decreased protease activity." evidence="6">
    <original>E</original>
    <variation>A</variation>
    <location>
        <position position="204"/>
    </location>
</feature>
<feature type="mutagenesis site" description="Loss of protease activity." evidence="4">
    <original>E</original>
    <variation>Q</variation>
    <location>
        <position position="204"/>
    </location>
</feature>
<feature type="mutagenesis site" description="Loss of protease activity." evidence="4">
    <original>H</original>
    <variation>Y</variation>
    <location>
        <position position="207"/>
    </location>
</feature>
<feature type="mutagenesis site" description="Loss of protease activity." evidence="4">
    <original>H</original>
    <variation>Y</variation>
    <location>
        <position position="212"/>
    </location>
</feature>
<feature type="mutagenesis site" description="Abolished disulfide bond, leading to impaired conformational state; when associated with A-332." evidence="9">
    <original>C</original>
    <variation>A</variation>
    <location>
        <position position="272"/>
    </location>
</feature>
<feature type="mutagenesis site" description="Abolished disulfide bond, leading to impaired conformational state; when associated with A-272." evidence="9">
    <original>C</original>
    <variation>A</variation>
    <location>
        <position position="332"/>
    </location>
</feature>
<sequence>MLRNIIRFKGFGKGTSGGFLKPVSFRVQLTRCYRYDNGPSYRRFNNGEYSQKSSFKSILLDKSSRKYLALLFGGCSLFYYTHLDKAPVSDRSRFIWVSRPLELTIGNYTYKSIWRQTQQEILPPQHPLSIKIENIFMKIVEAAYKDPSVDNSLLDGIKWEIHVVNDPTASPNAFVLPGGKVFIFSSILPICANDDGIATVLAHEFAHQLARHTAENLSKAPIYSLLGLVLYTVTGAHAINNILLDGFLRMPASRQMETEADYIGLMIMSRACFQPQESIKVWERMANFEKQMNRGGVVNMEFLSTHPASTRRIENMSKWLPKANEIYEQSDCSSMGNYYKSFFSM</sequence>
<name>OMA1_YEAST</name>
<comment type="function">
    <text evidence="4 5 6 7 8">Protease that is part of the quality control system in the inner membrane of mitochondria (PubMed:12963738, PubMed:22219186, PubMed:24648523, PubMed:27325672). Activated in response to various mitochondrial stress, leading to the proteolytic cleavage of target proteins, such as OXA1 and COX1 (PubMed:12963738, PubMed:22219186, PubMed:24648523). Cleaves and thereby promotes the turnover of mistranslated or misfolded membrane proteins (PubMed:12963738, PubMed:27325672). Cleaves the misfolded multi-pass membrane protein OXA1 (PubMed:12963738). Involved in quality control of cytochrome oxidase assembly: mediates the cleavage of COX1 in cells lacking COA2 (PubMed:22219186). Required for the stability of the respiratory supercomplexes (PubMed:26365306). Required for TOR signaling (PubMed:27325672).</text>
</comment>
<comment type="cofactor">
    <cofactor evidence="1">
        <name>Zn(2+)</name>
        <dbReference type="ChEBI" id="CHEBI:29105"/>
    </cofactor>
    <text evidence="1">Binds 1 zinc ion per subunit.</text>
</comment>
<comment type="activity regulation">
    <text evidence="6">Protease activity is induced in response to various mitochondrial stress, such as changes in membrane potential, oxidative stress or chronic hyperpolarization, and depends on its C-terminal region.</text>
</comment>
<comment type="subunit">
    <text evidence="6 9">Homooligomer.</text>
</comment>
<comment type="subcellular location">
    <subcellularLocation>
        <location evidence="4">Mitochondrion inner membrane</location>
        <topology evidence="10">Single-pass membrane protein</topology>
    </subcellularLocation>
</comment>
<comment type="PTM">
    <text evidence="9">Forms a redox-dependent disulfide bond, which plays a structural role and regulates its conformational stability and activity.</text>
</comment>
<comment type="disruption phenotype">
    <text evidence="6 8">Reduced ability to form viable colonies on glucose medium after acute treatment with hydrogen peroxide or chronic exposure to carbonyl cyanide m-chlorophenylhydrazone (CCCP) (PubMed:24648523). Cells are resistant to rapamycin and display reduced TOR signaling (PubMed:27325672). Oxidative-stress response is impaired (PubMed:27325672).</text>
</comment>
<comment type="similarity">
    <text evidence="10">Belongs to the peptidase M48 family.</text>
</comment>
<comment type="sequence caution" evidence="10">
    <conflict type="frameshift">
        <sequence resource="EMBL-CDS" id="CAA81638"/>
    </conflict>
</comment>
<comment type="sequence caution" evidence="10">
    <conflict type="frameshift">
        <sequence resource="EMBL-CDS" id="CAA82166"/>
    </conflict>
</comment>
<proteinExistence type="evidence at protein level"/>
<dbReference type="EC" id="3.4.24.-" evidence="4 5 6"/>
<dbReference type="EMBL" id="Z27116">
    <property type="protein sequence ID" value="CAA81638.1"/>
    <property type="status" value="ALT_FRAME"/>
    <property type="molecule type" value="Genomic_DNA"/>
</dbReference>
<dbReference type="EMBL" id="Z28312">
    <property type="protein sequence ID" value="CAA82166.1"/>
    <property type="status" value="ALT_FRAME"/>
    <property type="molecule type" value="Genomic_DNA"/>
</dbReference>
<dbReference type="EMBL" id="BK006944">
    <property type="protein sequence ID" value="DAA09237.1"/>
    <property type="molecule type" value="Genomic_DNA"/>
</dbReference>
<dbReference type="PIR" id="S38165">
    <property type="entry name" value="S38165"/>
</dbReference>
<dbReference type="RefSeq" id="NP_013013.2">
    <property type="nucleotide sequence ID" value="NM_001179877.1"/>
</dbReference>
<dbReference type="SMR" id="P36163"/>
<dbReference type="BioGRID" id="34218">
    <property type="interactions" value="43"/>
</dbReference>
<dbReference type="DIP" id="DIP-5087N"/>
<dbReference type="FunCoup" id="P36163">
    <property type="interactions" value="267"/>
</dbReference>
<dbReference type="IntAct" id="P36163">
    <property type="interactions" value="3"/>
</dbReference>
<dbReference type="STRING" id="4932.YKR087C"/>
<dbReference type="MEROPS" id="M48.018"/>
<dbReference type="PaxDb" id="4932-YKR087C"/>
<dbReference type="PeptideAtlas" id="P36163"/>
<dbReference type="EnsemblFungi" id="YKR087C_mRNA">
    <property type="protein sequence ID" value="YKR087C"/>
    <property type="gene ID" value="YKR087C"/>
</dbReference>
<dbReference type="GeneID" id="853962"/>
<dbReference type="KEGG" id="sce:YKR087C"/>
<dbReference type="AGR" id="SGD:S000001795"/>
<dbReference type="SGD" id="S000001795">
    <property type="gene designation" value="OMA1"/>
</dbReference>
<dbReference type="VEuPathDB" id="FungiDB:YKR087C"/>
<dbReference type="eggNOG" id="KOG2661">
    <property type="taxonomic scope" value="Eukaryota"/>
</dbReference>
<dbReference type="GeneTree" id="ENSGT00390000007027"/>
<dbReference type="HOGENOM" id="CLU_029002_1_0_1"/>
<dbReference type="InParanoid" id="P36163"/>
<dbReference type="OMA" id="ACFDFRY"/>
<dbReference type="OrthoDB" id="7464992at2759"/>
<dbReference type="BioCyc" id="YEAST:G3O-32050-MONOMER"/>
<dbReference type="Reactome" id="R-SCE-169911">
    <property type="pathway name" value="Regulation of Apoptosis"/>
</dbReference>
<dbReference type="Reactome" id="R-SCE-9840373">
    <property type="pathway name" value="Cellular response to mitochondrial stress"/>
</dbReference>
<dbReference type="BioGRID-ORCS" id="853962">
    <property type="hits" value="2 hits in 10 CRISPR screens"/>
</dbReference>
<dbReference type="PRO" id="PR:P36163"/>
<dbReference type="Proteomes" id="UP000002311">
    <property type="component" value="Chromosome XI"/>
</dbReference>
<dbReference type="RNAct" id="P36163">
    <property type="molecule type" value="protein"/>
</dbReference>
<dbReference type="GO" id="GO:0005743">
    <property type="term" value="C:mitochondrial inner membrane"/>
    <property type="evidence" value="ECO:0000314"/>
    <property type="project" value="SGD"/>
</dbReference>
<dbReference type="GO" id="GO:0005739">
    <property type="term" value="C:mitochondrion"/>
    <property type="evidence" value="ECO:0007005"/>
    <property type="project" value="SGD"/>
</dbReference>
<dbReference type="GO" id="GO:0046872">
    <property type="term" value="F:metal ion binding"/>
    <property type="evidence" value="ECO:0007669"/>
    <property type="project" value="UniProtKB-KW"/>
</dbReference>
<dbReference type="GO" id="GO:0004222">
    <property type="term" value="F:metalloendopeptidase activity"/>
    <property type="evidence" value="ECO:0000314"/>
    <property type="project" value="UniProtKB"/>
</dbReference>
<dbReference type="GO" id="GO:0035694">
    <property type="term" value="P:mitochondrial protein catabolic process"/>
    <property type="evidence" value="ECO:0000315"/>
    <property type="project" value="UniProtKB"/>
</dbReference>
<dbReference type="GO" id="GO:0034982">
    <property type="term" value="P:mitochondrial protein processing"/>
    <property type="evidence" value="ECO:0000318"/>
    <property type="project" value="GO_Central"/>
</dbReference>
<dbReference type="GO" id="GO:0141164">
    <property type="term" value="P:mitochondrial protein quality control"/>
    <property type="evidence" value="ECO:0000315"/>
    <property type="project" value="SGD"/>
</dbReference>
<dbReference type="GO" id="GO:0033108">
    <property type="term" value="P:mitochondrial respiratory chain complex assembly"/>
    <property type="evidence" value="ECO:0000315"/>
    <property type="project" value="UniProtKB"/>
</dbReference>
<dbReference type="GO" id="GO:0006515">
    <property type="term" value="P:protein quality control for misfolded or incompletely synthesized proteins"/>
    <property type="evidence" value="ECO:0000314"/>
    <property type="project" value="UniProtKB"/>
</dbReference>
<dbReference type="GO" id="GO:0031929">
    <property type="term" value="P:TOR signaling"/>
    <property type="evidence" value="ECO:0000315"/>
    <property type="project" value="SGD"/>
</dbReference>
<dbReference type="CDD" id="cd07331">
    <property type="entry name" value="M48C_Oma1_like"/>
    <property type="match status" value="1"/>
</dbReference>
<dbReference type="FunFam" id="3.30.2010.10:FF:000012">
    <property type="entry name" value="Metallopeptidase Oma1"/>
    <property type="match status" value="1"/>
</dbReference>
<dbReference type="Gene3D" id="3.30.2010.10">
    <property type="entry name" value="Metalloproteases ('zincins'), catalytic domain"/>
    <property type="match status" value="1"/>
</dbReference>
<dbReference type="InterPro" id="IPR051156">
    <property type="entry name" value="Mito/Outer_Membr_Metalloprot"/>
</dbReference>
<dbReference type="InterPro" id="IPR001915">
    <property type="entry name" value="Peptidase_M48"/>
</dbReference>
<dbReference type="PANTHER" id="PTHR22726">
    <property type="entry name" value="METALLOENDOPEPTIDASE OMA1"/>
    <property type="match status" value="1"/>
</dbReference>
<dbReference type="PANTHER" id="PTHR22726:SF1">
    <property type="entry name" value="METALLOENDOPEPTIDASE OMA1, MITOCHONDRIAL"/>
    <property type="match status" value="1"/>
</dbReference>
<dbReference type="Pfam" id="PF01435">
    <property type="entry name" value="Peptidase_M48"/>
    <property type="match status" value="1"/>
</dbReference>
<dbReference type="PROSITE" id="PS00142">
    <property type="entry name" value="ZINC_PROTEASE"/>
    <property type="match status" value="1"/>
</dbReference>
<gene>
    <name evidence="12" type="primary">OMA1</name>
    <name type="ordered locus">YKR087C</name>
    <name type="ORF">YKR407</name>
</gene>
<keyword id="KW-1015">Disulfide bond</keyword>
<keyword id="KW-0378">Hydrolase</keyword>
<keyword id="KW-0472">Membrane</keyword>
<keyword id="KW-0479">Metal-binding</keyword>
<keyword id="KW-0482">Metalloprotease</keyword>
<keyword id="KW-0496">Mitochondrion</keyword>
<keyword id="KW-0999">Mitochondrion inner membrane</keyword>
<keyword id="KW-0645">Protease</keyword>
<keyword id="KW-1185">Reference proteome</keyword>
<keyword id="KW-0882">Thioester bond</keyword>
<keyword id="KW-0812">Transmembrane</keyword>
<keyword id="KW-1133">Transmembrane helix</keyword>
<keyword id="KW-0862">Zinc</keyword>
<reference key="1">
    <citation type="journal article" date="1994" name="Yeast">
        <title>The complete sequence of an 18,002 bp segment of Saccharomyces cerevisiae chromosome XI contains the HBS1, MRP-L20 and PRP16 genes, and six new open reading frames.</title>
        <authorList>
            <person name="Garcia-Cantalejo J.M."/>
            <person name="Baladron V."/>
            <person name="Esteban P.F."/>
            <person name="Santos M.A."/>
            <person name="Bou G."/>
            <person name="Remacha M.A."/>
            <person name="Revuelta J.L."/>
            <person name="Ballesta J.P.G."/>
            <person name="Jimenez A."/>
            <person name="del Rey F."/>
        </authorList>
    </citation>
    <scope>NUCLEOTIDE SEQUENCE [GENOMIC DNA]</scope>
</reference>
<reference key="2">
    <citation type="journal article" date="1994" name="Nature">
        <title>Complete DNA sequence of yeast chromosome XI.</title>
        <authorList>
            <person name="Dujon B."/>
            <person name="Alexandraki D."/>
            <person name="Andre B."/>
            <person name="Ansorge W."/>
            <person name="Baladron V."/>
            <person name="Ballesta J.P.G."/>
            <person name="Banrevi A."/>
            <person name="Bolle P.-A."/>
            <person name="Bolotin-Fukuhara M."/>
            <person name="Bossier P."/>
            <person name="Bou G."/>
            <person name="Boyer J."/>
            <person name="Buitrago M.J."/>
            <person name="Cheret G."/>
            <person name="Colleaux L."/>
            <person name="Daignan-Fornier B."/>
            <person name="del Rey F."/>
            <person name="Dion C."/>
            <person name="Domdey H."/>
            <person name="Duesterhoeft A."/>
            <person name="Duesterhus S."/>
            <person name="Entian K.-D."/>
            <person name="Erfle H."/>
            <person name="Esteban P.F."/>
            <person name="Feldmann H."/>
            <person name="Fernandes L."/>
            <person name="Fobo G.M."/>
            <person name="Fritz C."/>
            <person name="Fukuhara H."/>
            <person name="Gabel C."/>
            <person name="Gaillon L."/>
            <person name="Garcia-Cantalejo J.M."/>
            <person name="Garcia-Ramirez J.J."/>
            <person name="Gent M.E."/>
            <person name="Ghazvini M."/>
            <person name="Goffeau A."/>
            <person name="Gonzalez A."/>
            <person name="Grothues D."/>
            <person name="Guerreiro P."/>
            <person name="Hegemann J.H."/>
            <person name="Hewitt N."/>
            <person name="Hilger F."/>
            <person name="Hollenberg C.P."/>
            <person name="Horaitis O."/>
            <person name="Indge K.J."/>
            <person name="Jacquier A."/>
            <person name="James C.M."/>
            <person name="Jauniaux J.-C."/>
            <person name="Jimenez A."/>
            <person name="Keuchel H."/>
            <person name="Kirchrath L."/>
            <person name="Kleine K."/>
            <person name="Koetter P."/>
            <person name="Legrain P."/>
            <person name="Liebl S."/>
            <person name="Louis E.J."/>
            <person name="Maia e Silva A."/>
            <person name="Marck C."/>
            <person name="Monnier A.-L."/>
            <person name="Moestl D."/>
            <person name="Mueller S."/>
            <person name="Obermaier B."/>
            <person name="Oliver S.G."/>
            <person name="Pallier C."/>
            <person name="Pascolo S."/>
            <person name="Pfeiffer F."/>
            <person name="Philippsen P."/>
            <person name="Planta R.J."/>
            <person name="Pohl F.M."/>
            <person name="Pohl T.M."/>
            <person name="Poehlmann R."/>
            <person name="Portetelle D."/>
            <person name="Purnelle B."/>
            <person name="Puzos V."/>
            <person name="Ramezani Rad M."/>
            <person name="Rasmussen S.W."/>
            <person name="Remacha M.A."/>
            <person name="Revuelta J.L."/>
            <person name="Richard G.-F."/>
            <person name="Rieger M."/>
            <person name="Rodrigues-Pousada C."/>
            <person name="Rose M."/>
            <person name="Rupp T."/>
            <person name="Santos M.A."/>
            <person name="Schwager C."/>
            <person name="Sensen C."/>
            <person name="Skala J."/>
            <person name="Soares H."/>
            <person name="Sor F."/>
            <person name="Stegemann J."/>
            <person name="Tettelin H."/>
            <person name="Thierry A."/>
            <person name="Tzermia M."/>
            <person name="Urrestarazu L.A."/>
            <person name="van Dyck L."/>
            <person name="van Vliet-Reedijk J.C."/>
            <person name="Valens M."/>
            <person name="Vandenbol M."/>
            <person name="Vilela C."/>
            <person name="Vissers S."/>
            <person name="von Wettstein D."/>
            <person name="Voss H."/>
            <person name="Wiemann S."/>
            <person name="Xu G."/>
            <person name="Zimmermann J."/>
            <person name="Haasemann M."/>
            <person name="Becker I."/>
            <person name="Mewes H.-W."/>
        </authorList>
    </citation>
    <scope>NUCLEOTIDE SEQUENCE [LARGE SCALE GENOMIC DNA]</scope>
    <source>
        <strain>ATCC 204508 / S288c</strain>
    </source>
</reference>
<reference key="3">
    <citation type="journal article" date="2014" name="G3 (Bethesda)">
        <title>The reference genome sequence of Saccharomyces cerevisiae: Then and now.</title>
        <authorList>
            <person name="Engel S.R."/>
            <person name="Dietrich F.S."/>
            <person name="Fisk D.G."/>
            <person name="Binkley G."/>
            <person name="Balakrishnan R."/>
            <person name="Costanzo M.C."/>
            <person name="Dwight S.S."/>
            <person name="Hitz B.C."/>
            <person name="Karra K."/>
            <person name="Nash R.S."/>
            <person name="Weng S."/>
            <person name="Wong E.D."/>
            <person name="Lloyd P."/>
            <person name="Skrzypek M.S."/>
            <person name="Miyasato S.R."/>
            <person name="Simison M."/>
            <person name="Cherry J.M."/>
        </authorList>
    </citation>
    <scope>GENOME REANNOTATION</scope>
    <source>
        <strain>ATCC 204508 / S288c</strain>
    </source>
</reference>
<reference key="4">
    <citation type="journal article" date="2003" name="J. Biol. Chem.">
        <title>Oma1, a novel membrane-bound metallopeptidase in mitochondria with activities overlapping with the m-AAA protease.</title>
        <authorList>
            <person name="Kaeser M."/>
            <person name="Kambacheld M."/>
            <person name="Kisters-Woike B."/>
            <person name="Langer T."/>
        </authorList>
    </citation>
    <scope>FUNCTION</scope>
    <scope>SUBCELLULAR LOCATION</scope>
    <scope>MUTAGENESIS OF GLU-204; HIS-207 AND HIS-212</scope>
</reference>
<reference key="5">
    <citation type="journal article" date="2003" name="Nature">
        <title>Sequencing and comparison of yeast species to identify genes and regulatory elements.</title>
        <authorList>
            <person name="Kellis M."/>
            <person name="Patterson N."/>
            <person name="Endrizzi M."/>
            <person name="Birren B.W."/>
            <person name="Lander E.S."/>
        </authorList>
    </citation>
    <scope>IDENTIFICATION OF FRAMESHIFT</scope>
</reference>
<reference key="6">
    <citation type="journal article" date="2003" name="Nature">
        <title>Global analysis of protein localization in budding yeast.</title>
        <authorList>
            <person name="Huh W.-K."/>
            <person name="Falvo J.V."/>
            <person name="Gerke L.C."/>
            <person name="Carroll A.S."/>
            <person name="Howson R.W."/>
            <person name="Weissman J.S."/>
            <person name="O'Shea E.K."/>
        </authorList>
    </citation>
    <scope>SUBCELLULAR LOCATION [LARGE SCALE ANALYSIS]</scope>
</reference>
<reference key="7">
    <citation type="journal article" date="2012" name="J. Biol. Chem.">
        <title>Selective Oma1 protease-mediated proteolysis of Cox1 subunit of cytochrome oxidase in assembly mutants.</title>
        <authorList>
            <person name="Khalimonchuk O."/>
            <person name="Jeong M.Y."/>
            <person name="Watts T."/>
            <person name="Ferris E."/>
            <person name="Winge D.R."/>
        </authorList>
    </citation>
    <scope>FUNCTION</scope>
</reference>
<reference key="8">
    <citation type="journal article" date="2014" name="J. Biol. Chem.">
        <title>Stress-triggered activation of the metalloprotease Oma1 involves its C-terminal region and is important for mitochondrial stress protection in yeast.</title>
        <authorList>
            <person name="Bohovych I."/>
            <person name="Donaldson G."/>
            <person name="Christianson S."/>
            <person name="Zahayko N."/>
            <person name="Khalimonchuk O."/>
        </authorList>
    </citation>
    <scope>FUNCTION</scope>
    <scope>SUBUNIT</scope>
    <scope>ACTIVITY REGULATION</scope>
    <scope>DISRUPTION PHENOTYPE</scope>
    <scope>ACTIVE SITE</scope>
    <scope>MUTAGENESIS OF HIS-203 AND GLU-204</scope>
</reference>
<reference key="9">
    <citation type="journal article" date="2015" name="Sci. Rep.">
        <title>metalloprotease OMA1 fine-tunes mitochondrial bioenergetic function and respiratory supercomplex stability.</title>
        <authorList>
            <person name="Bohovych I."/>
            <person name="Fernandez M.R."/>
            <person name="Rahn J.J."/>
            <person name="Stackley K.D."/>
            <person name="Bestman J.E."/>
            <person name="Anandhan A."/>
            <person name="Franco R."/>
            <person name="Claypool S.M."/>
            <person name="Lewis R.E."/>
            <person name="Chan S.S."/>
            <person name="Khalimonchuk O."/>
        </authorList>
    </citation>
    <scope>FUNCTION</scope>
</reference>
<reference key="10">
    <citation type="journal article" date="2016" name="Mol. Cell. Biol.">
        <title>Oma1 links mitochondrial protein quality control and TOR signaling to modulate physiological plasticity and cellular stress responses.</title>
        <authorList>
            <person name="Bohovych I."/>
            <person name="Kastora S."/>
            <person name="Christianson S."/>
            <person name="Topil D."/>
            <person name="Kim H."/>
            <person name="Fangman T."/>
            <person name="Zhou Y.J."/>
            <person name="Barrientos A."/>
            <person name="Lee J."/>
            <person name="Brown A.J."/>
            <person name="Khalimonchuk O."/>
        </authorList>
    </citation>
    <scope>FUNCTION</scope>
    <scope>DISRUPTION PHENOTYPE</scope>
</reference>
<reference key="11">
    <citation type="journal article" date="2019" name="Antioxid. Redox Signal.">
        <title>Redox regulation of the mitochondrial quality control protease Oma1.</title>
        <authorList>
            <person name="Bohovych I."/>
            <person name="Dietz J.V."/>
            <person name="Swenson S."/>
            <person name="Zahayko N."/>
            <person name="Khalimonchuk O."/>
        </authorList>
    </citation>
    <scope>DISULFIDE BOND</scope>
    <scope>SUBUNIT</scope>
    <scope>MUTAGENESIS OF CYS-272 AND CYS-332</scope>
</reference>
<accession>P36163</accession>
<accession>D6VXE7</accession>
<protein>
    <recommendedName>
        <fullName evidence="10">Mitochondrial metalloendopeptidase OMA1</fullName>
        <ecNumber evidence="4 5 6">3.4.24.-</ecNumber>
    </recommendedName>
</protein>
<organism>
    <name type="scientific">Saccharomyces cerevisiae (strain ATCC 204508 / S288c)</name>
    <name type="common">Baker's yeast</name>
    <dbReference type="NCBI Taxonomy" id="559292"/>
    <lineage>
        <taxon>Eukaryota</taxon>
        <taxon>Fungi</taxon>
        <taxon>Dikarya</taxon>
        <taxon>Ascomycota</taxon>
        <taxon>Saccharomycotina</taxon>
        <taxon>Saccharomycetes</taxon>
        <taxon>Saccharomycetales</taxon>
        <taxon>Saccharomycetaceae</taxon>
        <taxon>Saccharomyces</taxon>
    </lineage>
</organism>